<organism>
    <name type="scientific">Cryptomeria japonica</name>
    <name type="common">Japanese cedar</name>
    <name type="synonym">Cupressus japonica</name>
    <dbReference type="NCBI Taxonomy" id="3369"/>
    <lineage>
        <taxon>Eukaryota</taxon>
        <taxon>Viridiplantae</taxon>
        <taxon>Streptophyta</taxon>
        <taxon>Embryophyta</taxon>
        <taxon>Tracheophyta</taxon>
        <taxon>Spermatophyta</taxon>
        <taxon>Pinopsida</taxon>
        <taxon>Pinidae</taxon>
        <taxon>Conifers II</taxon>
        <taxon>Cupressales</taxon>
        <taxon>Cupressaceae</taxon>
        <taxon>Cryptomeria</taxon>
    </lineage>
</organism>
<sequence length="29" mass="3140">MDIVGIAWAALMVVFTFSLSLVVWGRSGL</sequence>
<comment type="function">
    <text evidence="1">Component of the cytochrome b6-f complex, which mediates electron transfer between photosystem II (PSII) and photosystem I (PSI), cyclic electron flow around PSI, and state transitions.</text>
</comment>
<comment type="subunit">
    <text evidence="1">The 4 large subunits of the cytochrome b6-f complex are cytochrome b6, subunit IV (17 kDa polypeptide, PetD), cytochrome f and the Rieske protein, while the 4 small subunits are PetG, PetL, PetM and PetN. The complex functions as a dimer.</text>
</comment>
<comment type="subcellular location">
    <subcellularLocation>
        <location evidence="1">Plastid</location>
        <location evidence="1">Chloroplast thylakoid membrane</location>
        <topology evidence="1">Single-pass membrane protein</topology>
    </subcellularLocation>
</comment>
<comment type="similarity">
    <text evidence="1">Belongs to the PetN family.</text>
</comment>
<geneLocation type="chloroplast"/>
<dbReference type="EMBL" id="AY727132">
    <property type="protein sequence ID" value="AAW55617.1"/>
    <property type="molecule type" value="Genomic_DNA"/>
</dbReference>
<dbReference type="EMBL" id="AP009377">
    <property type="protein sequence ID" value="BAG16683.1"/>
    <property type="molecule type" value="Genomic_DNA"/>
</dbReference>
<dbReference type="RefSeq" id="YP_001806685.1">
    <property type="nucleotide sequence ID" value="NC_010548.1"/>
</dbReference>
<dbReference type="SMR" id="Q5IHI1"/>
<dbReference type="GeneID" id="6166629"/>
<dbReference type="KEGG" id="cjf:6166629"/>
<dbReference type="GO" id="GO:0009535">
    <property type="term" value="C:chloroplast thylakoid membrane"/>
    <property type="evidence" value="ECO:0007669"/>
    <property type="project" value="UniProtKB-SubCell"/>
</dbReference>
<dbReference type="GO" id="GO:0009512">
    <property type="term" value="C:cytochrome b6f complex"/>
    <property type="evidence" value="ECO:0007669"/>
    <property type="project" value="InterPro"/>
</dbReference>
<dbReference type="GO" id="GO:0045158">
    <property type="term" value="F:electron transporter, transferring electrons within cytochrome b6/f complex of photosystem II activity"/>
    <property type="evidence" value="ECO:0007669"/>
    <property type="project" value="InterPro"/>
</dbReference>
<dbReference type="GO" id="GO:0017004">
    <property type="term" value="P:cytochrome complex assembly"/>
    <property type="evidence" value="ECO:0007669"/>
    <property type="project" value="UniProtKB-UniRule"/>
</dbReference>
<dbReference type="GO" id="GO:0015979">
    <property type="term" value="P:photosynthesis"/>
    <property type="evidence" value="ECO:0007669"/>
    <property type="project" value="UniProtKB-KW"/>
</dbReference>
<dbReference type="HAMAP" id="MF_00395">
    <property type="entry name" value="Cytb6_f_PetN"/>
    <property type="match status" value="1"/>
</dbReference>
<dbReference type="InterPro" id="IPR036143">
    <property type="entry name" value="Cytochr_b6-f_cplx_su8_sf"/>
</dbReference>
<dbReference type="InterPro" id="IPR005497">
    <property type="entry name" value="Cytochrome_b6-f_cplx_su8"/>
</dbReference>
<dbReference type="Pfam" id="PF03742">
    <property type="entry name" value="PetN"/>
    <property type="match status" value="1"/>
</dbReference>
<dbReference type="SUPFAM" id="SSF103451">
    <property type="entry name" value="PetN subunit of the cytochrome b6f complex"/>
    <property type="match status" value="1"/>
</dbReference>
<feature type="chain" id="PRO_0000217104" description="Cytochrome b6-f complex subunit 8">
    <location>
        <begin position="1"/>
        <end position="29"/>
    </location>
</feature>
<feature type="transmembrane region" description="Helical" evidence="1">
    <location>
        <begin position="3"/>
        <end position="23"/>
    </location>
</feature>
<reference key="1">
    <citation type="journal article" date="2005" name="Am. J. Bot.">
        <title>The tortoise and the hare II: relative utility of 21 noncoding chloroplast DNA sequences for phylogenetic analysis.</title>
        <authorList>
            <person name="Shaw J."/>
            <person name="Lickey E.B."/>
            <person name="Beck J.T."/>
            <person name="Farmer S.B."/>
            <person name="Liu W."/>
            <person name="Miller J."/>
            <person name="Siripun K.C."/>
            <person name="Winder C.T."/>
            <person name="Schilling E.E."/>
            <person name="Small R.L."/>
        </authorList>
        <dbReference type="AGRICOLA" id="IND43689705"/>
    </citation>
    <scope>NUCLEOTIDE SEQUENCE [GENOMIC DNA]</scope>
</reference>
<reference key="2">
    <citation type="journal article" date="2008" name="BMC Plant Biol.">
        <title>Complete nucleotide sequence of the Cryptomeria japonica D. Don. chloroplast genome and comparative chloroplast genomics: diversified genomic structure of coniferous species.</title>
        <authorList>
            <person name="Hirao T."/>
            <person name="Watanabe A."/>
            <person name="Kurita M."/>
            <person name="Kondo T."/>
            <person name="Takata K."/>
        </authorList>
    </citation>
    <scope>NUCLEOTIDE SEQUENCE [LARGE SCALE GENOMIC DNA]</scope>
</reference>
<keyword id="KW-0150">Chloroplast</keyword>
<keyword id="KW-0249">Electron transport</keyword>
<keyword id="KW-0472">Membrane</keyword>
<keyword id="KW-0602">Photosynthesis</keyword>
<keyword id="KW-0934">Plastid</keyword>
<keyword id="KW-0793">Thylakoid</keyword>
<keyword id="KW-0812">Transmembrane</keyword>
<keyword id="KW-1133">Transmembrane helix</keyword>
<keyword id="KW-0813">Transport</keyword>
<evidence type="ECO:0000255" key="1">
    <source>
        <dbReference type="HAMAP-Rule" id="MF_00395"/>
    </source>
</evidence>
<accession>Q5IHI1</accession>
<accession>B1VKH2</accession>
<name>PETN_CRYJA</name>
<gene>
    <name evidence="1" type="primary">petN</name>
</gene>
<proteinExistence type="inferred from homology"/>
<protein>
    <recommendedName>
        <fullName evidence="1">Cytochrome b6-f complex subunit 8</fullName>
    </recommendedName>
    <alternativeName>
        <fullName evidence="1">Cytochrome b6-f complex subunit PetN</fullName>
    </alternativeName>
    <alternativeName>
        <fullName evidence="1">Cytochrome b6-f complex subunit VIII</fullName>
    </alternativeName>
</protein>